<reference key="1">
    <citation type="journal article" date="2004" name="Nat. Genet.">
        <title>Complete sequencing and characterization of 21,243 full-length human cDNAs.</title>
        <authorList>
            <person name="Ota T."/>
            <person name="Suzuki Y."/>
            <person name="Nishikawa T."/>
            <person name="Otsuki T."/>
            <person name="Sugiyama T."/>
            <person name="Irie R."/>
            <person name="Wakamatsu A."/>
            <person name="Hayashi K."/>
            <person name="Sato H."/>
            <person name="Nagai K."/>
            <person name="Kimura K."/>
            <person name="Makita H."/>
            <person name="Sekine M."/>
            <person name="Obayashi M."/>
            <person name="Nishi T."/>
            <person name="Shibahara T."/>
            <person name="Tanaka T."/>
            <person name="Ishii S."/>
            <person name="Yamamoto J."/>
            <person name="Saito K."/>
            <person name="Kawai Y."/>
            <person name="Isono Y."/>
            <person name="Nakamura Y."/>
            <person name="Nagahari K."/>
            <person name="Murakami K."/>
            <person name="Yasuda T."/>
            <person name="Iwayanagi T."/>
            <person name="Wagatsuma M."/>
            <person name="Shiratori A."/>
            <person name="Sudo H."/>
            <person name="Hosoiri T."/>
            <person name="Kaku Y."/>
            <person name="Kodaira H."/>
            <person name="Kondo H."/>
            <person name="Sugawara M."/>
            <person name="Takahashi M."/>
            <person name="Kanda K."/>
            <person name="Yokoi T."/>
            <person name="Furuya T."/>
            <person name="Kikkawa E."/>
            <person name="Omura Y."/>
            <person name="Abe K."/>
            <person name="Kamihara K."/>
            <person name="Katsuta N."/>
            <person name="Sato K."/>
            <person name="Tanikawa M."/>
            <person name="Yamazaki M."/>
            <person name="Ninomiya K."/>
            <person name="Ishibashi T."/>
            <person name="Yamashita H."/>
            <person name="Murakawa K."/>
            <person name="Fujimori K."/>
            <person name="Tanai H."/>
            <person name="Kimata M."/>
            <person name="Watanabe M."/>
            <person name="Hiraoka S."/>
            <person name="Chiba Y."/>
            <person name="Ishida S."/>
            <person name="Ono Y."/>
            <person name="Takiguchi S."/>
            <person name="Watanabe S."/>
            <person name="Yosida M."/>
            <person name="Hotuta T."/>
            <person name="Kusano J."/>
            <person name="Kanehori K."/>
            <person name="Takahashi-Fujii A."/>
            <person name="Hara H."/>
            <person name="Tanase T.-O."/>
            <person name="Nomura Y."/>
            <person name="Togiya S."/>
            <person name="Komai F."/>
            <person name="Hara R."/>
            <person name="Takeuchi K."/>
            <person name="Arita M."/>
            <person name="Imose N."/>
            <person name="Musashino K."/>
            <person name="Yuuki H."/>
            <person name="Oshima A."/>
            <person name="Sasaki N."/>
            <person name="Aotsuka S."/>
            <person name="Yoshikawa Y."/>
            <person name="Matsunawa H."/>
            <person name="Ichihara T."/>
            <person name="Shiohata N."/>
            <person name="Sano S."/>
            <person name="Moriya S."/>
            <person name="Momiyama H."/>
            <person name="Satoh N."/>
            <person name="Takami S."/>
            <person name="Terashima Y."/>
            <person name="Suzuki O."/>
            <person name="Nakagawa S."/>
            <person name="Senoh A."/>
            <person name="Mizoguchi H."/>
            <person name="Goto Y."/>
            <person name="Shimizu F."/>
            <person name="Wakebe H."/>
            <person name="Hishigaki H."/>
            <person name="Watanabe T."/>
            <person name="Sugiyama A."/>
            <person name="Takemoto M."/>
            <person name="Kawakami B."/>
            <person name="Yamazaki M."/>
            <person name="Watanabe K."/>
            <person name="Kumagai A."/>
            <person name="Itakura S."/>
            <person name="Fukuzumi Y."/>
            <person name="Fujimori Y."/>
            <person name="Komiyama M."/>
            <person name="Tashiro H."/>
            <person name="Tanigami A."/>
            <person name="Fujiwara T."/>
            <person name="Ono T."/>
            <person name="Yamada K."/>
            <person name="Fujii Y."/>
            <person name="Ozaki K."/>
            <person name="Hirao M."/>
            <person name="Ohmori Y."/>
            <person name="Kawabata A."/>
            <person name="Hikiji T."/>
            <person name="Kobatake N."/>
            <person name="Inagaki H."/>
            <person name="Ikema Y."/>
            <person name="Okamoto S."/>
            <person name="Okitani R."/>
            <person name="Kawakami T."/>
            <person name="Noguchi S."/>
            <person name="Itoh T."/>
            <person name="Shigeta K."/>
            <person name="Senba T."/>
            <person name="Matsumura K."/>
            <person name="Nakajima Y."/>
            <person name="Mizuno T."/>
            <person name="Morinaga M."/>
            <person name="Sasaki M."/>
            <person name="Togashi T."/>
            <person name="Oyama M."/>
            <person name="Hata H."/>
            <person name="Watanabe M."/>
            <person name="Komatsu T."/>
            <person name="Mizushima-Sugano J."/>
            <person name="Satoh T."/>
            <person name="Shirai Y."/>
            <person name="Takahashi Y."/>
            <person name="Nakagawa K."/>
            <person name="Okumura K."/>
            <person name="Nagase T."/>
            <person name="Nomura N."/>
            <person name="Kikuchi H."/>
            <person name="Masuho Y."/>
            <person name="Yamashita R."/>
            <person name="Nakai K."/>
            <person name="Yada T."/>
            <person name="Nakamura Y."/>
            <person name="Ohara O."/>
            <person name="Isogai T."/>
            <person name="Sugano S."/>
        </authorList>
    </citation>
    <scope>NUCLEOTIDE SEQUENCE [LARGE SCALE MRNA] (ISOFORMS 1 AND 2)</scope>
    <source>
        <tissue>Carcinoma</tissue>
    </source>
</reference>
<reference key="2">
    <citation type="journal article" date="2006" name="Nature">
        <title>The DNA sequence, annotation and analysis of human chromosome 3.</title>
        <authorList>
            <person name="Muzny D.M."/>
            <person name="Scherer S.E."/>
            <person name="Kaul R."/>
            <person name="Wang J."/>
            <person name="Yu J."/>
            <person name="Sudbrak R."/>
            <person name="Buhay C.J."/>
            <person name="Chen R."/>
            <person name="Cree A."/>
            <person name="Ding Y."/>
            <person name="Dugan-Rocha S."/>
            <person name="Gill R."/>
            <person name="Gunaratne P."/>
            <person name="Harris R.A."/>
            <person name="Hawes A.C."/>
            <person name="Hernandez J."/>
            <person name="Hodgson A.V."/>
            <person name="Hume J."/>
            <person name="Jackson A."/>
            <person name="Khan Z.M."/>
            <person name="Kovar-Smith C."/>
            <person name="Lewis L.R."/>
            <person name="Lozado R.J."/>
            <person name="Metzker M.L."/>
            <person name="Milosavljevic A."/>
            <person name="Miner G.R."/>
            <person name="Morgan M.B."/>
            <person name="Nazareth L.V."/>
            <person name="Scott G."/>
            <person name="Sodergren E."/>
            <person name="Song X.-Z."/>
            <person name="Steffen D."/>
            <person name="Wei S."/>
            <person name="Wheeler D.A."/>
            <person name="Wright M.W."/>
            <person name="Worley K.C."/>
            <person name="Yuan Y."/>
            <person name="Zhang Z."/>
            <person name="Adams C.Q."/>
            <person name="Ansari-Lari M.A."/>
            <person name="Ayele M."/>
            <person name="Brown M.J."/>
            <person name="Chen G."/>
            <person name="Chen Z."/>
            <person name="Clendenning J."/>
            <person name="Clerc-Blankenburg K.P."/>
            <person name="Chen R."/>
            <person name="Chen Z."/>
            <person name="Davis C."/>
            <person name="Delgado O."/>
            <person name="Dinh H.H."/>
            <person name="Dong W."/>
            <person name="Draper H."/>
            <person name="Ernst S."/>
            <person name="Fu G."/>
            <person name="Gonzalez-Garay M.L."/>
            <person name="Garcia D.K."/>
            <person name="Gillett W."/>
            <person name="Gu J."/>
            <person name="Hao B."/>
            <person name="Haugen E."/>
            <person name="Havlak P."/>
            <person name="He X."/>
            <person name="Hennig S."/>
            <person name="Hu S."/>
            <person name="Huang W."/>
            <person name="Jackson L.R."/>
            <person name="Jacob L.S."/>
            <person name="Kelly S.H."/>
            <person name="Kube M."/>
            <person name="Levy R."/>
            <person name="Li Z."/>
            <person name="Liu B."/>
            <person name="Liu J."/>
            <person name="Liu W."/>
            <person name="Lu J."/>
            <person name="Maheshwari M."/>
            <person name="Nguyen B.-V."/>
            <person name="Okwuonu G.O."/>
            <person name="Palmeiri A."/>
            <person name="Pasternak S."/>
            <person name="Perez L.M."/>
            <person name="Phelps K.A."/>
            <person name="Plopper F.J."/>
            <person name="Qiang B."/>
            <person name="Raymond C."/>
            <person name="Rodriguez R."/>
            <person name="Saenphimmachak C."/>
            <person name="Santibanez J."/>
            <person name="Shen H."/>
            <person name="Shen Y."/>
            <person name="Subramanian S."/>
            <person name="Tabor P.E."/>
            <person name="Verduzco D."/>
            <person name="Waldron L."/>
            <person name="Wang J."/>
            <person name="Wang J."/>
            <person name="Wang Q."/>
            <person name="Williams G.A."/>
            <person name="Wong G.K.-S."/>
            <person name="Yao Z."/>
            <person name="Zhang J."/>
            <person name="Zhang X."/>
            <person name="Zhao G."/>
            <person name="Zhou J."/>
            <person name="Zhou Y."/>
            <person name="Nelson D."/>
            <person name="Lehrach H."/>
            <person name="Reinhardt R."/>
            <person name="Naylor S.L."/>
            <person name="Yang H."/>
            <person name="Olson M."/>
            <person name="Weinstock G."/>
            <person name="Gibbs R.A."/>
        </authorList>
    </citation>
    <scope>NUCLEOTIDE SEQUENCE [LARGE SCALE GENOMIC DNA]</scope>
</reference>
<reference key="3">
    <citation type="journal article" date="2004" name="Genome Res.">
        <title>The status, quality, and expansion of the NIH full-length cDNA project: the Mammalian Gene Collection (MGC).</title>
        <authorList>
            <consortium name="The MGC Project Team"/>
        </authorList>
    </citation>
    <scope>NUCLEOTIDE SEQUENCE [LARGE SCALE MRNA] (ISOFORM 1)</scope>
    <source>
        <tissue>Placenta</tissue>
    </source>
</reference>
<reference key="4">
    <citation type="journal article" date="2005" name="J. Biol. Chem.">
        <title>Cloning, expression, and characterization of the human mitochondrial beta-ketoacyl synthase. Complementation of the yeast CEM1 knock-out strain.</title>
        <authorList>
            <person name="Zhang L."/>
            <person name="Joshi A.K."/>
            <person name="Hofmann J."/>
            <person name="Schweizer E."/>
            <person name="Smith S."/>
        </authorList>
    </citation>
    <scope>FUNCTION</scope>
    <scope>SUBCELLULAR LOCATION</scope>
    <scope>TISSUE SPECIFICITY</scope>
    <scope>CATALYTIC ACTIVITY</scope>
    <scope>ACTIVITY REGULATION</scope>
    <scope>BIOPHYSICOCHEMICAL PROPERTIES</scope>
</reference>
<reference key="5">
    <citation type="journal article" date="2009" name="Science">
        <title>Lysine acetylation targets protein complexes and co-regulates major cellular functions.</title>
        <authorList>
            <person name="Choudhary C."/>
            <person name="Kumar C."/>
            <person name="Gnad F."/>
            <person name="Nielsen M.L."/>
            <person name="Rehman M."/>
            <person name="Walther T.C."/>
            <person name="Olsen J.V."/>
            <person name="Mann M."/>
        </authorList>
    </citation>
    <scope>ACETYLATION [LARGE SCALE ANALYSIS] AT LYS-174</scope>
    <scope>IDENTIFICATION BY MASS SPECTROMETRY [LARGE SCALE ANALYSIS]</scope>
</reference>
<reference key="6">
    <citation type="journal article" date="2011" name="BMC Syst. Biol.">
        <title>Initial characterization of the human central proteome.</title>
        <authorList>
            <person name="Burkard T.R."/>
            <person name="Planyavsky M."/>
            <person name="Kaupe I."/>
            <person name="Breitwieser F.P."/>
            <person name="Buerckstuemmer T."/>
            <person name="Bennett K.L."/>
            <person name="Superti-Furga G."/>
            <person name="Colinge J."/>
        </authorList>
    </citation>
    <scope>IDENTIFICATION BY MASS SPECTROMETRY [LARGE SCALE ANALYSIS]</scope>
</reference>
<reference key="7">
    <citation type="submission" date="2005-12" db="PDB data bank">
        <title>Structure of mitochondrial beta-ketoacyl synthase.</title>
        <authorList>
            <person name="Bunkoczi G."/>
            <person name="Wu X."/>
            <person name="Smee C."/>
            <person name="Gileadi O."/>
            <person name="Arrowsmith C."/>
            <person name="Edwards A."/>
            <person name="Sundstrom M."/>
            <person name="Weigelt J."/>
            <person name="von Delft F."/>
            <person name="Oppermann U."/>
        </authorList>
    </citation>
    <scope>X-RAY CRYSTALLOGRAPHY (1.8 ANGSTROMS) OF 39-459</scope>
</reference>
<reference key="8">
    <citation type="journal article" date="2007" name="Protein Sci.">
        <title>Structure of the human beta-ketoacyl [ACP] synthase from the mitochondrial type II fatty acid synthase.</title>
        <authorList>
            <person name="Christensen C.E."/>
            <person name="Kragelund B.B."/>
            <person name="von Wettstein-Knowles P."/>
            <person name="Henriksen A."/>
        </authorList>
    </citation>
    <scope>X-RAY CRYSTALLOGRAPHY (1.65 ANGSTROMS) OF 38-459</scope>
</reference>
<reference key="9">
    <citation type="journal article" date="2006" name="Science">
        <title>The consensus coding sequences of human breast and colorectal cancers.</title>
        <authorList>
            <person name="Sjoeblom T."/>
            <person name="Jones S."/>
            <person name="Wood L.D."/>
            <person name="Parsons D.W."/>
            <person name="Lin J."/>
            <person name="Barber T.D."/>
            <person name="Mandelker D."/>
            <person name="Leary R.J."/>
            <person name="Ptak J."/>
            <person name="Silliman N."/>
            <person name="Szabo S."/>
            <person name="Buckhaults P."/>
            <person name="Farrell C."/>
            <person name="Meeh P."/>
            <person name="Markowitz S.D."/>
            <person name="Willis J."/>
            <person name="Dawson D."/>
            <person name="Willson J.K.V."/>
            <person name="Gazdar A.F."/>
            <person name="Hartigan J."/>
            <person name="Wu L."/>
            <person name="Liu C."/>
            <person name="Parmigiani G."/>
            <person name="Park B.H."/>
            <person name="Bachman K.E."/>
            <person name="Papadopoulos N."/>
            <person name="Vogelstein B."/>
            <person name="Kinzler K.W."/>
            <person name="Velculescu V.E."/>
        </authorList>
    </citation>
    <scope>VARIANT [LARGE SCALE ANALYSIS] ILE-106</scope>
</reference>
<keyword id="KW-0002">3D-structure</keyword>
<keyword id="KW-0007">Acetylation</keyword>
<keyword id="KW-0012">Acyltransferase</keyword>
<keyword id="KW-0025">Alternative splicing</keyword>
<keyword id="KW-0275">Fatty acid biosynthesis</keyword>
<keyword id="KW-0276">Fatty acid metabolism</keyword>
<keyword id="KW-0444">Lipid biosynthesis</keyword>
<keyword id="KW-0443">Lipid metabolism</keyword>
<keyword id="KW-0496">Mitochondrion</keyword>
<keyword id="KW-1267">Proteomics identification</keyword>
<keyword id="KW-1185">Reference proteome</keyword>
<keyword id="KW-0808">Transferase</keyword>
<keyword id="KW-0809">Transit peptide</keyword>
<proteinExistence type="evidence at protein level"/>
<sequence>MSNCLQNFLKITSTRLLCSRLCQQLRSKRKFFGTVPISRLHRRVVITGIGLVTPLGVGTHLVWDRLIGGESGIVSLVGEEYKSIPCSVAAYVPRGSDEGQFNEQNFVSKSDIKSMSSPTIMAIGAAELAMKDSGWHPQSEADQVATGVAIGMGMIPLEVVSETALNFQTKGYNKVSPFFVPKILVNMAAGQVSIRYKLKGPNHAVSTACTTGAHAVGDSFRFIAHGDADVMVAGGTDSCISPLSLAGFSRARALSTNSDPKLACRPFHPKRDGFVMGEGAAVLVLEEYEHAVQRRARIYAEVLGYGLSGDAGHITAPDPEGEGALRCMAAALKDAGVQPEEISYINAHATSTPLGDAAENKAIKHLFKDHAYALAVSSTKGATGHLLGAAGAVEAAFTTLACYYQKLPPTLNLDCSEPEFDLNYVPLKAQEWKTEKRFIGLTNSFGFGGTNATLCIAGL</sequence>
<name>OXSM_HUMAN</name>
<dbReference type="EC" id="2.3.1.41" evidence="4"/>
<dbReference type="EMBL" id="AK000611">
    <property type="protein sequence ID" value="BAA91286.1"/>
    <property type="molecule type" value="mRNA"/>
</dbReference>
<dbReference type="EMBL" id="AK225260">
    <property type="status" value="NOT_ANNOTATED_CDS"/>
    <property type="molecule type" value="mRNA"/>
</dbReference>
<dbReference type="EMBL" id="AC092798">
    <property type="status" value="NOT_ANNOTATED_CDS"/>
    <property type="molecule type" value="Genomic_DNA"/>
</dbReference>
<dbReference type="EMBL" id="BC008202">
    <property type="protein sequence ID" value="AAH08202.1"/>
    <property type="molecule type" value="mRNA"/>
</dbReference>
<dbReference type="CCDS" id="CCDS2643.1">
    <molecule id="Q9NWU1-1"/>
</dbReference>
<dbReference type="CCDS" id="CCDS46780.1">
    <molecule id="Q9NWU1-2"/>
</dbReference>
<dbReference type="RefSeq" id="NP_001138863.1">
    <molecule id="Q9NWU1-2"/>
    <property type="nucleotide sequence ID" value="NM_001145391.2"/>
</dbReference>
<dbReference type="RefSeq" id="NP_060367.1">
    <molecule id="Q9NWU1-1"/>
    <property type="nucleotide sequence ID" value="NM_017897.3"/>
</dbReference>
<dbReference type="RefSeq" id="XP_006713279.1">
    <molecule id="Q9NWU1-1"/>
    <property type="nucleotide sequence ID" value="XM_006713216.5"/>
</dbReference>
<dbReference type="RefSeq" id="XP_016862202.1">
    <property type="nucleotide sequence ID" value="XM_017006713.1"/>
</dbReference>
<dbReference type="RefSeq" id="XP_054203004.1">
    <molecule id="Q9NWU1-1"/>
    <property type="nucleotide sequence ID" value="XM_054347029.1"/>
</dbReference>
<dbReference type="RefSeq" id="XP_054203005.1">
    <molecule id="Q9NWU1-1"/>
    <property type="nucleotide sequence ID" value="XM_054347030.1"/>
</dbReference>
<dbReference type="PDB" id="2C9H">
    <property type="method" value="X-ray"/>
    <property type="resolution" value="1.80 A"/>
    <property type="chains" value="A=39-459"/>
</dbReference>
<dbReference type="PDB" id="2IWY">
    <property type="method" value="X-ray"/>
    <property type="resolution" value="2.06 A"/>
    <property type="chains" value="A/B=38-459"/>
</dbReference>
<dbReference type="PDB" id="2IWZ">
    <property type="method" value="X-ray"/>
    <property type="resolution" value="1.65 A"/>
    <property type="chains" value="A/B=38-459"/>
</dbReference>
<dbReference type="PDBsum" id="2C9H"/>
<dbReference type="PDBsum" id="2IWY"/>
<dbReference type="PDBsum" id="2IWZ"/>
<dbReference type="SMR" id="Q9NWU1"/>
<dbReference type="BioGRID" id="120328">
    <property type="interactions" value="57"/>
</dbReference>
<dbReference type="FunCoup" id="Q9NWU1">
    <property type="interactions" value="1807"/>
</dbReference>
<dbReference type="IntAct" id="Q9NWU1">
    <property type="interactions" value="29"/>
</dbReference>
<dbReference type="MINT" id="Q9NWU1"/>
<dbReference type="STRING" id="9606.ENSP00000280701"/>
<dbReference type="SwissLipids" id="SLP:000001258"/>
<dbReference type="GlyGen" id="Q9NWU1">
    <property type="glycosylation" value="2 sites, 1 O-linked glycan (2 sites)"/>
</dbReference>
<dbReference type="iPTMnet" id="Q9NWU1"/>
<dbReference type="PhosphoSitePlus" id="Q9NWU1"/>
<dbReference type="SwissPalm" id="Q9NWU1"/>
<dbReference type="BioMuta" id="OXSM"/>
<dbReference type="DMDM" id="74753030"/>
<dbReference type="jPOST" id="Q9NWU1"/>
<dbReference type="MassIVE" id="Q9NWU1"/>
<dbReference type="PaxDb" id="9606-ENSP00000280701"/>
<dbReference type="PeptideAtlas" id="Q9NWU1"/>
<dbReference type="ProteomicsDB" id="82980">
    <molecule id="Q9NWU1-1"/>
</dbReference>
<dbReference type="ProteomicsDB" id="82981">
    <molecule id="Q9NWU1-2"/>
</dbReference>
<dbReference type="Pumba" id="Q9NWU1"/>
<dbReference type="Antibodypedia" id="11437">
    <property type="antibodies" value="211 antibodies from 23 providers"/>
</dbReference>
<dbReference type="DNASU" id="54995"/>
<dbReference type="Ensembl" id="ENST00000280701.8">
    <molecule id="Q9NWU1-1"/>
    <property type="protein sequence ID" value="ENSP00000280701.3"/>
    <property type="gene ID" value="ENSG00000151093.8"/>
</dbReference>
<dbReference type="Ensembl" id="ENST00000420173.2">
    <molecule id="Q9NWU1-2"/>
    <property type="protein sequence ID" value="ENSP00000411303.2"/>
    <property type="gene ID" value="ENSG00000151093.8"/>
</dbReference>
<dbReference type="GeneID" id="54995"/>
<dbReference type="KEGG" id="hsa:54995"/>
<dbReference type="MANE-Select" id="ENST00000280701.8">
    <property type="protein sequence ID" value="ENSP00000280701.3"/>
    <property type="RefSeq nucleotide sequence ID" value="NM_017897.3"/>
    <property type="RefSeq protein sequence ID" value="NP_060367.1"/>
</dbReference>
<dbReference type="UCSC" id="uc003cdn.4">
    <molecule id="Q9NWU1-1"/>
    <property type="organism name" value="human"/>
</dbReference>
<dbReference type="AGR" id="HGNC:26063"/>
<dbReference type="CTD" id="54995"/>
<dbReference type="DisGeNET" id="54995"/>
<dbReference type="GeneCards" id="OXSM"/>
<dbReference type="HGNC" id="HGNC:26063">
    <property type="gene designation" value="OXSM"/>
</dbReference>
<dbReference type="HPA" id="ENSG00000151093">
    <property type="expression patterns" value="Low tissue specificity"/>
</dbReference>
<dbReference type="MIM" id="610324">
    <property type="type" value="gene"/>
</dbReference>
<dbReference type="neXtProt" id="NX_Q9NWU1"/>
<dbReference type="OpenTargets" id="ENSG00000151093"/>
<dbReference type="PharmGKB" id="PA142671214"/>
<dbReference type="VEuPathDB" id="HostDB:ENSG00000151093"/>
<dbReference type="eggNOG" id="KOG1394">
    <property type="taxonomic scope" value="Eukaryota"/>
</dbReference>
<dbReference type="GeneTree" id="ENSGT00940000157768"/>
<dbReference type="HOGENOM" id="CLU_000022_69_2_1"/>
<dbReference type="InParanoid" id="Q9NWU1"/>
<dbReference type="OMA" id="QIGHCLG"/>
<dbReference type="OrthoDB" id="5334845at2759"/>
<dbReference type="PAN-GO" id="Q9NWU1">
    <property type="GO annotations" value="2 GO annotations based on evolutionary models"/>
</dbReference>
<dbReference type="PhylomeDB" id="Q9NWU1"/>
<dbReference type="BioCyc" id="MetaCyc:HS07707-MONOMER"/>
<dbReference type="BRENDA" id="2.3.1.41">
    <property type="organism ID" value="2681"/>
</dbReference>
<dbReference type="PathwayCommons" id="Q9NWU1"/>
<dbReference type="Reactome" id="R-HSA-9837999">
    <property type="pathway name" value="Mitochondrial protein degradation"/>
</dbReference>
<dbReference type="SABIO-RK" id="Q9NWU1"/>
<dbReference type="SignaLink" id="Q9NWU1"/>
<dbReference type="UniPathway" id="UPA00094"/>
<dbReference type="BioGRID-ORCS" id="54995">
    <property type="hits" value="139 hits in 1167 CRISPR screens"/>
</dbReference>
<dbReference type="ChiTaRS" id="OXSM">
    <property type="organism name" value="human"/>
</dbReference>
<dbReference type="EvolutionaryTrace" id="Q9NWU1"/>
<dbReference type="GenomeRNAi" id="54995"/>
<dbReference type="Pharos" id="Q9NWU1">
    <property type="development level" value="Tbio"/>
</dbReference>
<dbReference type="PRO" id="PR:Q9NWU1"/>
<dbReference type="Proteomes" id="UP000005640">
    <property type="component" value="Chromosome 3"/>
</dbReference>
<dbReference type="RNAct" id="Q9NWU1">
    <property type="molecule type" value="protein"/>
</dbReference>
<dbReference type="Bgee" id="ENSG00000151093">
    <property type="expression patterns" value="Expressed in right lobe of liver and 189 other cell types or tissues"/>
</dbReference>
<dbReference type="ExpressionAtlas" id="Q9NWU1">
    <property type="expression patterns" value="baseline and differential"/>
</dbReference>
<dbReference type="GO" id="GO:0005829">
    <property type="term" value="C:cytosol"/>
    <property type="evidence" value="ECO:0000314"/>
    <property type="project" value="HPA"/>
</dbReference>
<dbReference type="GO" id="GO:0005759">
    <property type="term" value="C:mitochondrial matrix"/>
    <property type="evidence" value="ECO:0000304"/>
    <property type="project" value="Reactome"/>
</dbReference>
<dbReference type="GO" id="GO:0005739">
    <property type="term" value="C:mitochondrion"/>
    <property type="evidence" value="ECO:0000314"/>
    <property type="project" value="LIFEdb"/>
</dbReference>
<dbReference type="GO" id="GO:0004315">
    <property type="term" value="F:3-oxoacyl-[acyl-carrier-protein] synthase activity"/>
    <property type="evidence" value="ECO:0000314"/>
    <property type="project" value="HGNC-UCL"/>
</dbReference>
<dbReference type="GO" id="GO:0006637">
    <property type="term" value="P:acyl-CoA metabolic process"/>
    <property type="evidence" value="ECO:0000314"/>
    <property type="project" value="HGNC-UCL"/>
</dbReference>
<dbReference type="GO" id="GO:0006633">
    <property type="term" value="P:fatty acid biosynthetic process"/>
    <property type="evidence" value="ECO:0000318"/>
    <property type="project" value="GO_Central"/>
</dbReference>
<dbReference type="GO" id="GO:0051792">
    <property type="term" value="P:medium-chain fatty acid biosynthetic process"/>
    <property type="evidence" value="ECO:0000314"/>
    <property type="project" value="HGNC-UCL"/>
</dbReference>
<dbReference type="GO" id="GO:0051790">
    <property type="term" value="P:short-chain fatty acid biosynthetic process"/>
    <property type="evidence" value="ECO:0000314"/>
    <property type="project" value="HGNC-UCL"/>
</dbReference>
<dbReference type="CDD" id="cd00834">
    <property type="entry name" value="KAS_I_II"/>
    <property type="match status" value="1"/>
</dbReference>
<dbReference type="FunFam" id="3.40.47.10:FF:000015">
    <property type="entry name" value="3-oxoacyl-[acyl-carrier-protein] synthase, mitochondrial"/>
    <property type="match status" value="1"/>
</dbReference>
<dbReference type="FunFam" id="3.40.47.10:FF:000024">
    <property type="entry name" value="3-oxoacyl-[acyl-carrier-protein] synthase, mitochondrial"/>
    <property type="match status" value="1"/>
</dbReference>
<dbReference type="Gene3D" id="3.40.47.10">
    <property type="match status" value="2"/>
</dbReference>
<dbReference type="InterPro" id="IPR017568">
    <property type="entry name" value="3-oxoacyl-ACP_synth-2"/>
</dbReference>
<dbReference type="InterPro" id="IPR000794">
    <property type="entry name" value="Beta-ketoacyl_synthase"/>
</dbReference>
<dbReference type="InterPro" id="IPR018201">
    <property type="entry name" value="Ketoacyl_synth_AS"/>
</dbReference>
<dbReference type="InterPro" id="IPR014031">
    <property type="entry name" value="Ketoacyl_synth_C"/>
</dbReference>
<dbReference type="InterPro" id="IPR014030">
    <property type="entry name" value="Ketoacyl_synth_N"/>
</dbReference>
<dbReference type="InterPro" id="IPR020841">
    <property type="entry name" value="PKS_Beta-ketoAc_synthase_dom"/>
</dbReference>
<dbReference type="InterPro" id="IPR016039">
    <property type="entry name" value="Thiolase-like"/>
</dbReference>
<dbReference type="NCBIfam" id="TIGR03150">
    <property type="entry name" value="fabF"/>
    <property type="match status" value="1"/>
</dbReference>
<dbReference type="NCBIfam" id="NF005589">
    <property type="entry name" value="PRK07314.1"/>
    <property type="match status" value="1"/>
</dbReference>
<dbReference type="PANTHER" id="PTHR11712:SF336">
    <property type="entry name" value="3-OXOACYL-[ACYL-CARRIER-PROTEIN] SYNTHASE, MITOCHONDRIAL"/>
    <property type="match status" value="1"/>
</dbReference>
<dbReference type="PANTHER" id="PTHR11712">
    <property type="entry name" value="POLYKETIDE SYNTHASE-RELATED"/>
    <property type="match status" value="1"/>
</dbReference>
<dbReference type="Pfam" id="PF00109">
    <property type="entry name" value="ketoacyl-synt"/>
    <property type="match status" value="1"/>
</dbReference>
<dbReference type="Pfam" id="PF02801">
    <property type="entry name" value="Ketoacyl-synt_C"/>
    <property type="match status" value="1"/>
</dbReference>
<dbReference type="PIRSF" id="PIRSF000447">
    <property type="entry name" value="KAS_II"/>
    <property type="match status" value="1"/>
</dbReference>
<dbReference type="SMART" id="SM00825">
    <property type="entry name" value="PKS_KS"/>
    <property type="match status" value="1"/>
</dbReference>
<dbReference type="SUPFAM" id="SSF53901">
    <property type="entry name" value="Thiolase-like"/>
    <property type="match status" value="2"/>
</dbReference>
<dbReference type="PROSITE" id="PS00606">
    <property type="entry name" value="KS3_1"/>
    <property type="match status" value="1"/>
</dbReference>
<dbReference type="PROSITE" id="PS52004">
    <property type="entry name" value="KS3_2"/>
    <property type="match status" value="1"/>
</dbReference>
<organism>
    <name type="scientific">Homo sapiens</name>
    <name type="common">Human</name>
    <dbReference type="NCBI Taxonomy" id="9606"/>
    <lineage>
        <taxon>Eukaryota</taxon>
        <taxon>Metazoa</taxon>
        <taxon>Chordata</taxon>
        <taxon>Craniata</taxon>
        <taxon>Vertebrata</taxon>
        <taxon>Euteleostomi</taxon>
        <taxon>Mammalia</taxon>
        <taxon>Eutheria</taxon>
        <taxon>Euarchontoglires</taxon>
        <taxon>Primates</taxon>
        <taxon>Haplorrhini</taxon>
        <taxon>Catarrhini</taxon>
        <taxon>Hominidae</taxon>
        <taxon>Homo</taxon>
    </lineage>
</organism>
<evidence type="ECO:0000250" key="1">
    <source>
        <dbReference type="UniProtKB" id="Q9D404"/>
    </source>
</evidence>
<evidence type="ECO:0000255" key="2"/>
<evidence type="ECO:0000255" key="3">
    <source>
        <dbReference type="PROSITE-ProRule" id="PRU01348"/>
    </source>
</evidence>
<evidence type="ECO:0000269" key="4">
    <source>
    </source>
</evidence>
<evidence type="ECO:0000269" key="5">
    <source>
    </source>
</evidence>
<evidence type="ECO:0000303" key="6">
    <source>
    </source>
</evidence>
<evidence type="ECO:0000305" key="7"/>
<evidence type="ECO:0000305" key="8">
    <source>
    </source>
</evidence>
<evidence type="ECO:0000312" key="9">
    <source>
        <dbReference type="HGNC" id="HGNC:26063"/>
    </source>
</evidence>
<evidence type="ECO:0007744" key="10">
    <source>
    </source>
</evidence>
<evidence type="ECO:0007829" key="11">
    <source>
        <dbReference type="PDB" id="2IWZ"/>
    </source>
</evidence>
<comment type="function">
    <text evidence="4">May play a role in the biosynthesis of lipoic acid as well as longer chain fatty acids required for optimal mitochondrial function.</text>
</comment>
<comment type="catalytic activity">
    <reaction evidence="4">
        <text>a fatty acyl-[ACP] + malonyl-[ACP] + H(+) = a 3-oxoacyl-[ACP] + holo-[ACP] + CO2</text>
        <dbReference type="Rhea" id="RHEA:22836"/>
        <dbReference type="Rhea" id="RHEA-COMP:9623"/>
        <dbReference type="Rhea" id="RHEA-COMP:9685"/>
        <dbReference type="Rhea" id="RHEA-COMP:9916"/>
        <dbReference type="Rhea" id="RHEA-COMP:14125"/>
        <dbReference type="ChEBI" id="CHEBI:15378"/>
        <dbReference type="ChEBI" id="CHEBI:16526"/>
        <dbReference type="ChEBI" id="CHEBI:64479"/>
        <dbReference type="ChEBI" id="CHEBI:78449"/>
        <dbReference type="ChEBI" id="CHEBI:78776"/>
        <dbReference type="ChEBI" id="CHEBI:138651"/>
        <dbReference type="EC" id="2.3.1.41"/>
    </reaction>
    <physiologicalReaction direction="left-to-right" evidence="8">
        <dbReference type="Rhea" id="RHEA:22837"/>
    </physiologicalReaction>
</comment>
<comment type="catalytic activity">
    <reaction evidence="4">
        <text>butanoyl-[ACP] + malonyl-[ACP] + H(+) = 3-oxohexanoyl-[ACP] + holo-[ACP] + CO2</text>
        <dbReference type="Rhea" id="RHEA:41820"/>
        <dbReference type="Rhea" id="RHEA-COMP:9623"/>
        <dbReference type="Rhea" id="RHEA-COMP:9628"/>
        <dbReference type="Rhea" id="RHEA-COMP:9629"/>
        <dbReference type="Rhea" id="RHEA-COMP:9685"/>
        <dbReference type="ChEBI" id="CHEBI:15378"/>
        <dbReference type="ChEBI" id="CHEBI:16526"/>
        <dbReference type="ChEBI" id="CHEBI:64479"/>
        <dbReference type="ChEBI" id="CHEBI:78449"/>
        <dbReference type="ChEBI" id="CHEBI:78454"/>
        <dbReference type="ChEBI" id="CHEBI:78456"/>
    </reaction>
    <physiologicalReaction direction="left-to-right" evidence="8">
        <dbReference type="Rhea" id="RHEA:41821"/>
    </physiologicalReaction>
</comment>
<comment type="catalytic activity">
    <reaction evidence="4">
        <text>hexanoyl-[ACP] + malonyl-[ACP] + H(+) = 3-oxooctanoyl-[ACP] + holo-[ACP] + CO2</text>
        <dbReference type="Rhea" id="RHEA:41836"/>
        <dbReference type="Rhea" id="RHEA-COMP:9623"/>
        <dbReference type="Rhea" id="RHEA-COMP:9632"/>
        <dbReference type="Rhea" id="RHEA-COMP:9633"/>
        <dbReference type="Rhea" id="RHEA-COMP:9685"/>
        <dbReference type="ChEBI" id="CHEBI:15378"/>
        <dbReference type="ChEBI" id="CHEBI:16526"/>
        <dbReference type="ChEBI" id="CHEBI:64479"/>
        <dbReference type="ChEBI" id="CHEBI:78449"/>
        <dbReference type="ChEBI" id="CHEBI:78459"/>
        <dbReference type="ChEBI" id="CHEBI:78460"/>
    </reaction>
    <physiologicalReaction direction="left-to-right" evidence="8">
        <dbReference type="Rhea" id="RHEA:41837"/>
    </physiologicalReaction>
</comment>
<comment type="catalytic activity">
    <reaction evidence="4">
        <text>octanoyl-[ACP] + malonyl-[ACP] + H(+) = 3-oxodecanoyl-[ACP] + holo-[ACP] + CO2</text>
        <dbReference type="Rhea" id="RHEA:41852"/>
        <dbReference type="Rhea" id="RHEA-COMP:9623"/>
        <dbReference type="Rhea" id="RHEA-COMP:9636"/>
        <dbReference type="Rhea" id="RHEA-COMP:9637"/>
        <dbReference type="Rhea" id="RHEA-COMP:9685"/>
        <dbReference type="ChEBI" id="CHEBI:15378"/>
        <dbReference type="ChEBI" id="CHEBI:16526"/>
        <dbReference type="ChEBI" id="CHEBI:64479"/>
        <dbReference type="ChEBI" id="CHEBI:78449"/>
        <dbReference type="ChEBI" id="CHEBI:78463"/>
        <dbReference type="ChEBI" id="CHEBI:78464"/>
    </reaction>
    <physiologicalReaction direction="left-to-right" evidence="8">
        <dbReference type="Rhea" id="RHEA:41853"/>
    </physiologicalReaction>
</comment>
<comment type="catalytic activity">
    <reaction evidence="4">
        <text>decanoyl-[ACP] + malonyl-[ACP] + H(+) = 3-oxododecanoyl-[ACP] + holo-[ACP] + CO2</text>
        <dbReference type="Rhea" id="RHEA:41868"/>
        <dbReference type="Rhea" id="RHEA-COMP:9623"/>
        <dbReference type="Rhea" id="RHEA-COMP:9640"/>
        <dbReference type="Rhea" id="RHEA-COMP:9641"/>
        <dbReference type="Rhea" id="RHEA-COMP:9685"/>
        <dbReference type="ChEBI" id="CHEBI:15378"/>
        <dbReference type="ChEBI" id="CHEBI:16526"/>
        <dbReference type="ChEBI" id="CHEBI:64479"/>
        <dbReference type="ChEBI" id="CHEBI:78449"/>
        <dbReference type="ChEBI" id="CHEBI:78468"/>
        <dbReference type="ChEBI" id="CHEBI:78469"/>
    </reaction>
    <physiologicalReaction direction="left-to-right" evidence="8">
        <dbReference type="Rhea" id="RHEA:41869"/>
    </physiologicalReaction>
</comment>
<comment type="catalytic activity">
    <reaction evidence="4">
        <text>dodecanoyl-[ACP] + malonyl-[ACP] + H(+) = 3-oxotetradecanoyl-[ACP] + holo-[ACP] + CO2</text>
        <dbReference type="Rhea" id="RHEA:41884"/>
        <dbReference type="Rhea" id="RHEA-COMP:9623"/>
        <dbReference type="Rhea" id="RHEA-COMP:9644"/>
        <dbReference type="Rhea" id="RHEA-COMP:9645"/>
        <dbReference type="Rhea" id="RHEA-COMP:9685"/>
        <dbReference type="ChEBI" id="CHEBI:15378"/>
        <dbReference type="ChEBI" id="CHEBI:16526"/>
        <dbReference type="ChEBI" id="CHEBI:64479"/>
        <dbReference type="ChEBI" id="CHEBI:65264"/>
        <dbReference type="ChEBI" id="CHEBI:78449"/>
        <dbReference type="ChEBI" id="CHEBI:78473"/>
    </reaction>
    <physiologicalReaction direction="left-to-right" evidence="8">
        <dbReference type="Rhea" id="RHEA:41885"/>
    </physiologicalReaction>
</comment>
<comment type="catalytic activity">
    <reaction evidence="4">
        <text>tetradecanoyl-[ACP] + malonyl-[ACP] + H(+) = 3-oxohexadecanoyl-[ACP] + holo-[ACP] + CO2</text>
        <dbReference type="Rhea" id="RHEA:41900"/>
        <dbReference type="Rhea" id="RHEA-COMP:9623"/>
        <dbReference type="Rhea" id="RHEA-COMP:9648"/>
        <dbReference type="Rhea" id="RHEA-COMP:9649"/>
        <dbReference type="Rhea" id="RHEA-COMP:9685"/>
        <dbReference type="ChEBI" id="CHEBI:15378"/>
        <dbReference type="ChEBI" id="CHEBI:16526"/>
        <dbReference type="ChEBI" id="CHEBI:64479"/>
        <dbReference type="ChEBI" id="CHEBI:78449"/>
        <dbReference type="ChEBI" id="CHEBI:78477"/>
        <dbReference type="ChEBI" id="CHEBI:78478"/>
    </reaction>
    <physiologicalReaction direction="left-to-right" evidence="8">
        <dbReference type="Rhea" id="RHEA:41901"/>
    </physiologicalReaction>
</comment>
<comment type="activity regulation">
    <text evidence="4">Inhibited by cerulenin.</text>
</comment>
<comment type="biophysicochemical properties">
    <kinetics>
        <KM evidence="4">3.9 uM for C4-[acyl-carrier-protein]</KM>
        <KM evidence="4">1.9 uM for C6-[acyl-carrier-protein]</KM>
        <KM evidence="4">10.9 uM for C8-[acyl-carrier-protein]</KM>
        <KM evidence="4">1.8 uM for C10-[acyl-carrier-protein]</KM>
        <KM evidence="4">9.5 uM for C12-[acyl-carrier-protein]</KM>
        <KM evidence="4">50.8 uM for C14-[acyl-carrier-protein]</KM>
        <Vmax evidence="4">129.0 nmol/min/mg enzyme toward C4-[acyl-carrier-protein]</Vmax>
        <Vmax evidence="4">241.0 nmol/min/mg enzyme toward C6-[acyl-carrier-protein]</Vmax>
        <Vmax evidence="4">271.0 nmol/min/mg enzyme toward C8-[acyl-carrier-protein]</Vmax>
        <Vmax evidence="4">364.0 nmol/min/mg enzyme toward C10-[acyl-carrier-protein]</Vmax>
        <Vmax evidence="4">1045.0 nmol/min/mg enzyme toward C12-[acyl-carrier-protein]</Vmax>
        <Vmax evidence="4">115.0 nmol/min/mg enzyme toward C14-[acyl-carrier-protein]</Vmax>
        <text>The highest catalytic efficiency is observed for C10-[acyl-carrier-protein].</text>
    </kinetics>
</comment>
<comment type="pathway">
    <text>Lipid metabolism; fatty acid biosynthesis.</text>
</comment>
<comment type="subcellular location">
    <subcellularLocation>
        <location evidence="4">Mitochondrion</location>
    </subcellularLocation>
</comment>
<comment type="alternative products">
    <event type="alternative splicing"/>
    <isoform>
        <id>Q9NWU1-1</id>
        <name>1</name>
        <sequence type="displayed"/>
    </isoform>
    <isoform>
        <id>Q9NWU1-2</id>
        <name>2</name>
        <sequence type="described" ref="VSP_041671"/>
    </isoform>
</comment>
<comment type="tissue specificity">
    <text evidence="4">Widely expressed. Higher expression in heart, skeletal muscle, liver and kidney which contain high levels of active mitochondria.</text>
</comment>
<comment type="similarity">
    <text evidence="7">Belongs to the thiolase-like superfamily. Beta-ketoacyl-ACP synthases family.</text>
</comment>
<gene>
    <name evidence="9" type="primary">OXSM</name>
</gene>
<protein>
    <recommendedName>
        <fullName evidence="7">3-oxoacyl-[acyl-carrier-protein] synthase, mitochondrial</fullName>
        <ecNumber evidence="4">2.3.1.41</ecNumber>
    </recommendedName>
    <alternativeName>
        <fullName>Beta-ketoacyl-ACP synthase</fullName>
    </alternativeName>
</protein>
<feature type="transit peptide" description="Mitochondrion" evidence="2">
    <location>
        <begin position="1"/>
        <end position="27"/>
    </location>
</feature>
<feature type="chain" id="PRO_0000232660" description="3-oxoacyl-[acyl-carrier-protein] synthase, mitochondrial">
    <location>
        <begin position="28"/>
        <end position="459"/>
    </location>
</feature>
<feature type="domain" description="Ketosynthase family 3 (KS3)" evidence="3">
    <location>
        <begin position="41"/>
        <end position="458"/>
    </location>
</feature>
<feature type="active site" description="For beta-ketoacyl synthase activity" evidence="3">
    <location>
        <position position="209"/>
    </location>
</feature>
<feature type="active site" description="For beta-ketoacyl synthase activity" evidence="3">
    <location>
        <position position="348"/>
    </location>
</feature>
<feature type="active site" description="For beta-ketoacyl synthase activity" evidence="3">
    <location>
        <position position="385"/>
    </location>
</feature>
<feature type="modified residue" description="N6-acetyllysine; alternate" evidence="1">
    <location>
        <position position="109"/>
    </location>
</feature>
<feature type="modified residue" description="N6-succinyllysine; alternate" evidence="1">
    <location>
        <position position="109"/>
    </location>
</feature>
<feature type="modified residue" description="N6-succinyllysine" evidence="1">
    <location>
        <position position="113"/>
    </location>
</feature>
<feature type="modified residue" description="N6-acetyllysine; alternate" evidence="10">
    <location>
        <position position="174"/>
    </location>
</feature>
<feature type="modified residue" description="N6-succinyllysine; alternate" evidence="1">
    <location>
        <position position="174"/>
    </location>
</feature>
<feature type="splice variant" id="VSP_041671" description="In isoform 2." evidence="6">
    <location>
        <begin position="229"/>
        <end position="311"/>
    </location>
</feature>
<feature type="sequence variant" id="VAR_036064" description="In a breast cancer sample; somatic mutation." evidence="5">
    <original>F</original>
    <variation>I</variation>
    <location>
        <position position="106"/>
    </location>
</feature>
<feature type="strand" evidence="11">
    <location>
        <begin position="38"/>
        <end position="41"/>
    </location>
</feature>
<feature type="strand" evidence="11">
    <location>
        <begin position="44"/>
        <end position="53"/>
    </location>
</feature>
<feature type="strand" evidence="11">
    <location>
        <begin position="56"/>
        <end position="58"/>
    </location>
</feature>
<feature type="helix" evidence="11">
    <location>
        <begin position="59"/>
        <end position="67"/>
    </location>
</feature>
<feature type="strand" evidence="11">
    <location>
        <begin position="73"/>
        <end position="75"/>
    </location>
</feature>
<feature type="helix" evidence="11">
    <location>
        <begin position="79"/>
        <end position="81"/>
    </location>
</feature>
<feature type="strand" evidence="11">
    <location>
        <begin position="88"/>
        <end position="90"/>
    </location>
</feature>
<feature type="strand" evidence="11">
    <location>
        <begin position="94"/>
        <end position="97"/>
    </location>
</feature>
<feature type="helix" evidence="11">
    <location>
        <begin position="103"/>
        <end position="105"/>
    </location>
</feature>
<feature type="helix" evidence="11">
    <location>
        <begin position="109"/>
        <end position="112"/>
    </location>
</feature>
<feature type="helix" evidence="11">
    <location>
        <begin position="117"/>
        <end position="133"/>
    </location>
</feature>
<feature type="helix" evidence="11">
    <location>
        <begin position="140"/>
        <end position="144"/>
    </location>
</feature>
<feature type="strand" evidence="11">
    <location>
        <begin position="146"/>
        <end position="153"/>
    </location>
</feature>
<feature type="helix" evidence="11">
    <location>
        <begin position="157"/>
        <end position="170"/>
    </location>
</feature>
<feature type="helix" evidence="11">
    <location>
        <begin position="172"/>
        <end position="174"/>
    </location>
</feature>
<feature type="helix" evidence="11">
    <location>
        <begin position="179"/>
        <end position="182"/>
    </location>
</feature>
<feature type="helix" evidence="11">
    <location>
        <begin position="187"/>
        <end position="196"/>
    </location>
</feature>
<feature type="helix" evidence="11">
    <location>
        <begin position="208"/>
        <end position="210"/>
    </location>
</feature>
<feature type="helix" evidence="11">
    <location>
        <begin position="211"/>
        <end position="225"/>
    </location>
</feature>
<feature type="strand" evidence="11">
    <location>
        <begin position="229"/>
        <end position="237"/>
    </location>
</feature>
<feature type="helix" evidence="11">
    <location>
        <begin position="242"/>
        <end position="250"/>
    </location>
</feature>
<feature type="turn" evidence="11">
    <location>
        <begin position="260"/>
        <end position="262"/>
    </location>
</feature>
<feature type="strand" evidence="11">
    <location>
        <begin position="279"/>
        <end position="287"/>
    </location>
</feature>
<feature type="helix" evidence="11">
    <location>
        <begin position="288"/>
        <end position="293"/>
    </location>
</feature>
<feature type="strand" evidence="11">
    <location>
        <begin position="300"/>
        <end position="309"/>
    </location>
</feature>
<feature type="strand" evidence="11">
    <location>
        <begin position="314"/>
        <end position="316"/>
    </location>
</feature>
<feature type="helix" evidence="11">
    <location>
        <begin position="322"/>
        <end position="335"/>
    </location>
</feature>
<feature type="helix" evidence="11">
    <location>
        <begin position="339"/>
        <end position="341"/>
    </location>
</feature>
<feature type="strand" evidence="11">
    <location>
        <begin position="344"/>
        <end position="346"/>
    </location>
</feature>
<feature type="helix" evidence="11">
    <location>
        <begin position="353"/>
        <end position="367"/>
    </location>
</feature>
<feature type="helix" evidence="11">
    <location>
        <begin position="368"/>
        <end position="372"/>
    </location>
</feature>
<feature type="strand" evidence="11">
    <location>
        <begin position="374"/>
        <end position="377"/>
    </location>
</feature>
<feature type="helix" evidence="11">
    <location>
        <begin position="380"/>
        <end position="383"/>
    </location>
</feature>
<feature type="helix" evidence="11">
    <location>
        <begin position="387"/>
        <end position="389"/>
    </location>
</feature>
<feature type="helix" evidence="11">
    <location>
        <begin position="390"/>
        <end position="404"/>
    </location>
</feature>
<feature type="strand" evidence="11">
    <location>
        <begin position="426"/>
        <end position="428"/>
    </location>
</feature>
<feature type="strand" evidence="11">
    <location>
        <begin position="435"/>
        <end position="437"/>
    </location>
</feature>
<feature type="strand" evidence="11">
    <location>
        <begin position="439"/>
        <end position="446"/>
    </location>
</feature>
<feature type="turn" evidence="11">
    <location>
        <begin position="447"/>
        <end position="449"/>
    </location>
</feature>
<feature type="strand" evidence="11">
    <location>
        <begin position="450"/>
        <end position="457"/>
    </location>
</feature>
<accession>Q9NWU1</accession>